<feature type="chain" id="PRO_0000350122" description="Ribosomal RNA large subunit methyltransferase Cfr">
    <location>
        <begin position="1"/>
        <end position="344"/>
    </location>
</feature>
<feature type="domain" description="Radical SAM core" evidence="2">
    <location>
        <begin position="97"/>
        <end position="330"/>
    </location>
</feature>
<feature type="active site" description="Proton acceptor" evidence="1">
    <location>
        <position position="90"/>
    </location>
</feature>
<feature type="active site" description="S-methylcysteine intermediate" evidence="1">
    <location>
        <position position="335"/>
    </location>
</feature>
<feature type="binding site" evidence="1">
    <location>
        <position position="111"/>
    </location>
    <ligand>
        <name>[4Fe-4S] cluster</name>
        <dbReference type="ChEBI" id="CHEBI:49883"/>
        <note>4Fe-4S-S-AdoMet</note>
    </ligand>
</feature>
<feature type="binding site" evidence="1">
    <location>
        <position position="115"/>
    </location>
    <ligand>
        <name>[4Fe-4S] cluster</name>
        <dbReference type="ChEBI" id="CHEBI:49883"/>
        <note>4Fe-4S-S-AdoMet</note>
    </ligand>
</feature>
<feature type="binding site" evidence="1">
    <location>
        <position position="118"/>
    </location>
    <ligand>
        <name>[4Fe-4S] cluster</name>
        <dbReference type="ChEBI" id="CHEBI:49883"/>
        <note>4Fe-4S-S-AdoMet</note>
    </ligand>
</feature>
<feature type="binding site" evidence="1">
    <location>
        <begin position="157"/>
        <end position="158"/>
    </location>
    <ligand>
        <name>S-adenosyl-L-methionine</name>
        <dbReference type="ChEBI" id="CHEBI:59789"/>
    </ligand>
</feature>
<feature type="binding site" evidence="1">
    <location>
        <position position="188"/>
    </location>
    <ligand>
        <name>S-adenosyl-L-methionine</name>
        <dbReference type="ChEBI" id="CHEBI:59789"/>
    </ligand>
</feature>
<feature type="binding site" evidence="1">
    <location>
        <begin position="211"/>
        <end position="213"/>
    </location>
    <ligand>
        <name>S-adenosyl-L-methionine</name>
        <dbReference type="ChEBI" id="CHEBI:59789"/>
    </ligand>
</feature>
<feature type="binding site" evidence="1">
    <location>
        <position position="292"/>
    </location>
    <ligand>
        <name>S-adenosyl-L-methionine</name>
        <dbReference type="ChEBI" id="CHEBI:59789"/>
    </ligand>
</feature>
<feature type="disulfide bond" description="(transient)" evidence="1">
    <location>
        <begin position="104"/>
        <end position="335"/>
    </location>
</feature>
<proteinExistence type="inferred from homology"/>
<reference key="1">
    <citation type="journal article" date="2007" name="PLoS ONE">
        <title>Analysis of the neurotoxin complex genes in Clostridium botulinum A1-A4 and B1 strains: BoNT/A3, /Ba4 and /B1 clusters are located within plasmids.</title>
        <authorList>
            <person name="Smith T.J."/>
            <person name="Hill K.K."/>
            <person name="Foley B.T."/>
            <person name="Detter J.C."/>
            <person name="Munk A.C."/>
            <person name="Bruce D.C."/>
            <person name="Doggett N.A."/>
            <person name="Smith L.A."/>
            <person name="Marks J.D."/>
            <person name="Xie G."/>
            <person name="Brettin T.S."/>
        </authorList>
    </citation>
    <scope>NUCLEOTIDE SEQUENCE [LARGE SCALE GENOMIC DNA]</scope>
    <source>
        <strain>Okra / Type B1</strain>
    </source>
</reference>
<dbReference type="EC" id="2.1.1.224" evidence="1"/>
<dbReference type="EMBL" id="CP000939">
    <property type="protein sequence ID" value="ACA43818.1"/>
    <property type="molecule type" value="Genomic_DNA"/>
</dbReference>
<dbReference type="RefSeq" id="WP_015957497.1">
    <property type="nucleotide sequence ID" value="NC_010516.1"/>
</dbReference>
<dbReference type="SMR" id="B1IL14"/>
<dbReference type="KEGG" id="cbb:CLD_1710"/>
<dbReference type="HOGENOM" id="CLU_029101_0_2_9"/>
<dbReference type="Proteomes" id="UP000008541">
    <property type="component" value="Chromosome"/>
</dbReference>
<dbReference type="GO" id="GO:0005737">
    <property type="term" value="C:cytoplasm"/>
    <property type="evidence" value="ECO:0007669"/>
    <property type="project" value="UniProtKB-SubCell"/>
</dbReference>
<dbReference type="GO" id="GO:0051539">
    <property type="term" value="F:4 iron, 4 sulfur cluster binding"/>
    <property type="evidence" value="ECO:0007669"/>
    <property type="project" value="UniProtKB-UniRule"/>
</dbReference>
<dbReference type="GO" id="GO:0046872">
    <property type="term" value="F:metal ion binding"/>
    <property type="evidence" value="ECO:0007669"/>
    <property type="project" value="UniProtKB-KW"/>
</dbReference>
<dbReference type="GO" id="GO:0016433">
    <property type="term" value="F:rRNA (adenine) methyltransferase activity"/>
    <property type="evidence" value="ECO:0007669"/>
    <property type="project" value="UniProtKB-UniRule"/>
</dbReference>
<dbReference type="GO" id="GO:0019843">
    <property type="term" value="F:rRNA binding"/>
    <property type="evidence" value="ECO:0007669"/>
    <property type="project" value="UniProtKB-UniRule"/>
</dbReference>
<dbReference type="GO" id="GO:0046677">
    <property type="term" value="P:response to antibiotic"/>
    <property type="evidence" value="ECO:0007669"/>
    <property type="project" value="UniProtKB-KW"/>
</dbReference>
<dbReference type="GO" id="GO:0070475">
    <property type="term" value="P:rRNA base methylation"/>
    <property type="evidence" value="ECO:0007669"/>
    <property type="project" value="UniProtKB-UniRule"/>
</dbReference>
<dbReference type="GO" id="GO:0030488">
    <property type="term" value="P:tRNA methylation"/>
    <property type="evidence" value="ECO:0007669"/>
    <property type="project" value="TreeGrafter"/>
</dbReference>
<dbReference type="CDD" id="cd01335">
    <property type="entry name" value="Radical_SAM"/>
    <property type="match status" value="1"/>
</dbReference>
<dbReference type="FunFam" id="3.20.20.70:FF:000014">
    <property type="entry name" value="Probable dual-specificity RNA methyltransferase RlmN"/>
    <property type="match status" value="1"/>
</dbReference>
<dbReference type="Gene3D" id="1.10.150.530">
    <property type="match status" value="1"/>
</dbReference>
<dbReference type="Gene3D" id="3.20.20.70">
    <property type="entry name" value="Aldolase class I"/>
    <property type="match status" value="1"/>
</dbReference>
<dbReference type="HAMAP" id="MF_01873">
    <property type="entry name" value="23SrRNA_methyltr_Cfr"/>
    <property type="match status" value="1"/>
</dbReference>
<dbReference type="InterPro" id="IPR013785">
    <property type="entry name" value="Aldolase_TIM"/>
</dbReference>
<dbReference type="InterPro" id="IPR040072">
    <property type="entry name" value="Methyltransferase_A"/>
</dbReference>
<dbReference type="InterPro" id="IPR022881">
    <property type="entry name" value="rRNA_lsu_MeTfrase_Cfr"/>
</dbReference>
<dbReference type="InterPro" id="IPR004383">
    <property type="entry name" value="rRNA_lsu_MTrfase_RlmN/Cfr"/>
</dbReference>
<dbReference type="InterPro" id="IPR007197">
    <property type="entry name" value="rSAM"/>
</dbReference>
<dbReference type="NCBIfam" id="NF000424">
    <property type="entry name" value="CfrAB"/>
    <property type="match status" value="1"/>
</dbReference>
<dbReference type="NCBIfam" id="NF011024">
    <property type="entry name" value="PRK14453.1"/>
    <property type="match status" value="1"/>
</dbReference>
<dbReference type="NCBIfam" id="TIGR04432">
    <property type="entry name" value="rSAM_Cfr"/>
    <property type="match status" value="1"/>
</dbReference>
<dbReference type="PANTHER" id="PTHR30544">
    <property type="entry name" value="23S RRNA METHYLTRANSFERASE"/>
    <property type="match status" value="1"/>
</dbReference>
<dbReference type="PANTHER" id="PTHR30544:SF5">
    <property type="entry name" value="RADICAL SAM CORE DOMAIN-CONTAINING PROTEIN"/>
    <property type="match status" value="1"/>
</dbReference>
<dbReference type="Pfam" id="PF04055">
    <property type="entry name" value="Radical_SAM"/>
    <property type="match status" value="1"/>
</dbReference>
<dbReference type="PIRSF" id="PIRSF006004">
    <property type="entry name" value="CHP00048"/>
    <property type="match status" value="1"/>
</dbReference>
<dbReference type="SFLD" id="SFLDF00275">
    <property type="entry name" value="adenosine_C2_methyltransferase"/>
    <property type="match status" value="1"/>
</dbReference>
<dbReference type="SFLD" id="SFLDF00296">
    <property type="entry name" value="adenosine_C8_methyltransferase"/>
    <property type="match status" value="1"/>
</dbReference>
<dbReference type="SFLD" id="SFLDS00029">
    <property type="entry name" value="Radical_SAM"/>
    <property type="match status" value="1"/>
</dbReference>
<dbReference type="SUPFAM" id="SSF102114">
    <property type="entry name" value="Radical SAM enzymes"/>
    <property type="match status" value="1"/>
</dbReference>
<dbReference type="PROSITE" id="PS51918">
    <property type="entry name" value="RADICAL_SAM"/>
    <property type="match status" value="1"/>
</dbReference>
<organism>
    <name type="scientific">Clostridium botulinum (strain Okra / Type B1)</name>
    <dbReference type="NCBI Taxonomy" id="498213"/>
    <lineage>
        <taxon>Bacteria</taxon>
        <taxon>Bacillati</taxon>
        <taxon>Bacillota</taxon>
        <taxon>Clostridia</taxon>
        <taxon>Eubacteriales</taxon>
        <taxon>Clostridiaceae</taxon>
        <taxon>Clostridium</taxon>
    </lineage>
</organism>
<keyword id="KW-0004">4Fe-4S</keyword>
<keyword id="KW-0046">Antibiotic resistance</keyword>
<keyword id="KW-0963">Cytoplasm</keyword>
<keyword id="KW-1015">Disulfide bond</keyword>
<keyword id="KW-0408">Iron</keyword>
<keyword id="KW-0411">Iron-sulfur</keyword>
<keyword id="KW-0479">Metal-binding</keyword>
<keyword id="KW-0489">Methyltransferase</keyword>
<keyword id="KW-0698">rRNA processing</keyword>
<keyword id="KW-0949">S-adenosyl-L-methionine</keyword>
<keyword id="KW-0808">Transferase</keyword>
<comment type="function">
    <text evidence="1">Specifically methylates position 8 of adenine 2503 in 23S rRNA. Confers resistance to some classes of antibiotics.</text>
</comment>
<comment type="catalytic activity">
    <reaction evidence="1">
        <text>adenosine(2503) in 23S rRNA + 2 reduced [2Fe-2S]-[ferredoxin] + 2 S-adenosyl-L-methionine = 8-methyladenosine(2503) in 23S rRNA + 5'-deoxyadenosine + L-methionine + 2 oxidized [2Fe-2S]-[ferredoxin] + S-adenosyl-L-homocysteine</text>
        <dbReference type="Rhea" id="RHEA:42632"/>
        <dbReference type="Rhea" id="RHEA-COMP:10000"/>
        <dbReference type="Rhea" id="RHEA-COMP:10001"/>
        <dbReference type="Rhea" id="RHEA-COMP:10152"/>
        <dbReference type="Rhea" id="RHEA-COMP:10153"/>
        <dbReference type="ChEBI" id="CHEBI:17319"/>
        <dbReference type="ChEBI" id="CHEBI:33737"/>
        <dbReference type="ChEBI" id="CHEBI:33738"/>
        <dbReference type="ChEBI" id="CHEBI:57844"/>
        <dbReference type="ChEBI" id="CHEBI:57856"/>
        <dbReference type="ChEBI" id="CHEBI:59789"/>
        <dbReference type="ChEBI" id="CHEBI:74411"/>
        <dbReference type="ChEBI" id="CHEBI:74543"/>
        <dbReference type="EC" id="2.1.1.224"/>
    </reaction>
</comment>
<comment type="cofactor">
    <cofactor evidence="1">
        <name>[4Fe-4S] cluster</name>
        <dbReference type="ChEBI" id="CHEBI:49883"/>
    </cofactor>
    <text evidence="1">Binds 1 [4Fe-4S] cluster. The cluster is coordinated with 3 cysteines and an exchangeable S-adenosyl-L-methionine.</text>
</comment>
<comment type="subcellular location">
    <subcellularLocation>
        <location evidence="1">Cytoplasm</location>
    </subcellularLocation>
</comment>
<comment type="miscellaneous">
    <text evidence="1">Reaction proceeds by a ping-pong mechanism involving intermediate methylation of a conserved cysteine residue.</text>
</comment>
<comment type="similarity">
    <text evidence="1">Belongs to the radical SAM superfamily. RlmN family. Cfr subfamily.</text>
</comment>
<protein>
    <recommendedName>
        <fullName evidence="1">Ribosomal RNA large subunit methyltransferase Cfr</fullName>
        <ecNumber evidence="1">2.1.1.224</ecNumber>
    </recommendedName>
    <alternativeName>
        <fullName evidence="1">23S rRNA (adenine(2503)-C(8))-methyltransferase</fullName>
    </alternativeName>
    <alternativeName>
        <fullName evidence="1">23S rRNA m8A2503 methyltransferase</fullName>
    </alternativeName>
</protein>
<gene>
    <name evidence="1" type="primary">cfr</name>
    <name type="ordered locus">CLD_1710</name>
</gene>
<accession>B1IL14</accession>
<evidence type="ECO:0000255" key="1">
    <source>
        <dbReference type="HAMAP-Rule" id="MF_01873"/>
    </source>
</evidence>
<evidence type="ECO:0000255" key="2">
    <source>
        <dbReference type="PROSITE-ProRule" id="PRU01266"/>
    </source>
</evidence>
<name>CFR_CLOBK</name>
<sequence>MKQTKTKYGKMKQMVSNLKLPDYRYEQLTKAIFHQRIDNFDDIHILPKALRMSLVNEFGKNVSSVIPVFSQDSKQAQKLLFELTDGERIEAVGLKYKQGWESFCISSQCGCGFGCRFCATGSAGFKRNLTADEITDQLLYFYFNNHRLNSISFMGMGEAFANPELFDAVKILTDQNLFGLSQRRITISTIGIIPGIQRLTKKFPQVNLAFSLHSPFESRRSDLMPINKRFPLNEVMKTLDEHIIHTGRRVFIAYIMLEGINDSKEHAEAVVGLLKNRGSWEHLYHIDLIPYNSTDKTTFKFQSSSAIKQFCSTLKKAGISATVRTQFGSEISAACGQLCYENEL</sequence>